<dbReference type="EC" id="2.3.2.27"/>
<dbReference type="EMBL" id="AC092335">
    <property type="status" value="NOT_ANNOTATED_CDS"/>
    <property type="molecule type" value="Genomic_DNA"/>
</dbReference>
<dbReference type="EMBL" id="AC016650">
    <property type="status" value="NOT_ANNOTATED_CDS"/>
    <property type="molecule type" value="Genomic_DNA"/>
</dbReference>
<dbReference type="EMBL" id="BC150513">
    <property type="protein sequence ID" value="AAI50514.1"/>
    <property type="molecule type" value="mRNA"/>
</dbReference>
<dbReference type="EMBL" id="BC150514">
    <property type="protein sequence ID" value="AAI50515.1"/>
    <property type="molecule type" value="mRNA"/>
</dbReference>
<dbReference type="EMBL" id="CR590337">
    <property type="status" value="NOT_ANNOTATED_CDS"/>
    <property type="molecule type" value="mRNA"/>
</dbReference>
<dbReference type="CCDS" id="CCDS47192.1">
    <molecule id="A6NNE9-1"/>
</dbReference>
<dbReference type="RefSeq" id="NP_001096032.1">
    <molecule id="A6NNE9-1"/>
    <property type="nucleotide sequence ID" value="NM_001102562.3"/>
</dbReference>
<dbReference type="BioGRID" id="137127">
    <property type="interactions" value="1"/>
</dbReference>
<dbReference type="FunCoup" id="A6NNE9">
    <property type="interactions" value="7"/>
</dbReference>
<dbReference type="STRING" id="9606.ENSP00000333181"/>
<dbReference type="GlyGen" id="A6NNE9">
    <property type="glycosylation" value="2 sites, 1 O-linked glycan (1 site)"/>
</dbReference>
<dbReference type="iPTMnet" id="A6NNE9"/>
<dbReference type="PhosphoSitePlus" id="A6NNE9"/>
<dbReference type="BioMuta" id="MARCH11"/>
<dbReference type="MassIVE" id="A6NNE9"/>
<dbReference type="PaxDb" id="9606-ENSP00000333181"/>
<dbReference type="PeptideAtlas" id="A6NNE9"/>
<dbReference type="ProteomicsDB" id="1603">
    <molecule id="A6NNE9-1"/>
</dbReference>
<dbReference type="ProteomicsDB" id="1604">
    <molecule id="A6NNE9-2"/>
</dbReference>
<dbReference type="Antibodypedia" id="3060">
    <property type="antibodies" value="93 antibodies from 13 providers"/>
</dbReference>
<dbReference type="DNASU" id="441061"/>
<dbReference type="Ensembl" id="ENST00000332432.9">
    <molecule id="A6NNE9-1"/>
    <property type="protein sequence ID" value="ENSP00000333181.7"/>
    <property type="gene ID" value="ENSG00000183654.9"/>
</dbReference>
<dbReference type="GeneID" id="441061"/>
<dbReference type="KEGG" id="hsa:441061"/>
<dbReference type="MANE-Select" id="ENST00000332432.9">
    <property type="protein sequence ID" value="ENSP00000333181.7"/>
    <property type="RefSeq nucleotide sequence ID" value="NM_001102562.3"/>
    <property type="RefSeq protein sequence ID" value="NP_001096032.1"/>
</dbReference>
<dbReference type="UCSC" id="uc003jfo.3">
    <molecule id="A6NNE9-1"/>
    <property type="organism name" value="human"/>
</dbReference>
<dbReference type="AGR" id="HGNC:33609"/>
<dbReference type="CTD" id="441061"/>
<dbReference type="GeneCards" id="MARCHF11"/>
<dbReference type="HGNC" id="HGNC:33609">
    <property type="gene designation" value="MARCHF11"/>
</dbReference>
<dbReference type="HPA" id="ENSG00000183654">
    <property type="expression patterns" value="Tissue enriched (testis)"/>
</dbReference>
<dbReference type="MIM" id="613338">
    <property type="type" value="gene"/>
</dbReference>
<dbReference type="neXtProt" id="NX_A6NNE9"/>
<dbReference type="OpenTargets" id="ENSG00000183654"/>
<dbReference type="VEuPathDB" id="HostDB:ENSG00000183654"/>
<dbReference type="eggNOG" id="KOG1609">
    <property type="taxonomic scope" value="Eukaryota"/>
</dbReference>
<dbReference type="GeneTree" id="ENSGT00940000160025"/>
<dbReference type="HOGENOM" id="CLU_045217_2_1_1"/>
<dbReference type="InParanoid" id="A6NNE9"/>
<dbReference type="OMA" id="QWQSITV"/>
<dbReference type="OrthoDB" id="264354at2759"/>
<dbReference type="PAN-GO" id="A6NNE9">
    <property type="GO annotations" value="1 GO annotation based on evolutionary models"/>
</dbReference>
<dbReference type="PhylomeDB" id="A6NNE9"/>
<dbReference type="TreeFam" id="TF319557"/>
<dbReference type="PathwayCommons" id="A6NNE9"/>
<dbReference type="SIGNOR" id="A6NNE9"/>
<dbReference type="UniPathway" id="UPA00143"/>
<dbReference type="BioGRID-ORCS" id="441061">
    <property type="hits" value="6 hits in 1130 CRISPR screens"/>
</dbReference>
<dbReference type="ChiTaRS" id="MARCH11">
    <property type="organism name" value="human"/>
</dbReference>
<dbReference type="GenomeRNAi" id="441061"/>
<dbReference type="Pharos" id="A6NNE9">
    <property type="development level" value="Tbio"/>
</dbReference>
<dbReference type="PRO" id="PR:A6NNE9"/>
<dbReference type="Proteomes" id="UP000005640">
    <property type="component" value="Chromosome 5"/>
</dbReference>
<dbReference type="RNAct" id="A6NNE9">
    <property type="molecule type" value="protein"/>
</dbReference>
<dbReference type="Bgee" id="ENSG00000183654">
    <property type="expression patterns" value="Expressed in sperm and 99 other cell types or tissues"/>
</dbReference>
<dbReference type="ExpressionAtlas" id="A6NNE9">
    <property type="expression patterns" value="baseline and differential"/>
</dbReference>
<dbReference type="GO" id="GO:0030659">
    <property type="term" value="C:cytoplasmic vesicle membrane"/>
    <property type="evidence" value="ECO:0007669"/>
    <property type="project" value="UniProtKB-SubCell"/>
</dbReference>
<dbReference type="GO" id="GO:0004842">
    <property type="term" value="F:ubiquitin-protein transferase activity"/>
    <property type="evidence" value="ECO:0000318"/>
    <property type="project" value="GO_Central"/>
</dbReference>
<dbReference type="GO" id="GO:0008270">
    <property type="term" value="F:zinc ion binding"/>
    <property type="evidence" value="ECO:0007669"/>
    <property type="project" value="UniProtKB-KW"/>
</dbReference>
<dbReference type="GO" id="GO:0016567">
    <property type="term" value="P:protein ubiquitination"/>
    <property type="evidence" value="ECO:0007669"/>
    <property type="project" value="UniProtKB-UniPathway"/>
</dbReference>
<dbReference type="CDD" id="cd16810">
    <property type="entry name" value="RING_CH-C4HC3_MARCH11"/>
    <property type="match status" value="1"/>
</dbReference>
<dbReference type="Gene3D" id="3.30.40.10">
    <property type="entry name" value="Zinc/RING finger domain, C3HC4 (zinc finger)"/>
    <property type="match status" value="1"/>
</dbReference>
<dbReference type="InterPro" id="IPR047906">
    <property type="entry name" value="MARCHF11_RING_CH-C4HC3"/>
</dbReference>
<dbReference type="InterPro" id="IPR046356">
    <property type="entry name" value="MARCHF4/9/11"/>
</dbReference>
<dbReference type="InterPro" id="IPR011016">
    <property type="entry name" value="Znf_RING-CH"/>
</dbReference>
<dbReference type="InterPro" id="IPR013083">
    <property type="entry name" value="Znf_RING/FYVE/PHD"/>
</dbReference>
<dbReference type="PANTHER" id="PTHR46053">
    <property type="entry name" value="E3 UBIQUITIN-PROTEIN LIGASE MARCH4-LIKE"/>
    <property type="match status" value="1"/>
</dbReference>
<dbReference type="PANTHER" id="PTHR46053:SF1">
    <property type="entry name" value="E3 UBIQUITIN-PROTEIN LIGASE MARCHF11"/>
    <property type="match status" value="1"/>
</dbReference>
<dbReference type="Pfam" id="PF12906">
    <property type="entry name" value="RINGv"/>
    <property type="match status" value="1"/>
</dbReference>
<dbReference type="SMART" id="SM00744">
    <property type="entry name" value="RINGv"/>
    <property type="match status" value="1"/>
</dbReference>
<dbReference type="SUPFAM" id="SSF57850">
    <property type="entry name" value="RING/U-box"/>
    <property type="match status" value="1"/>
</dbReference>
<dbReference type="PROSITE" id="PS51292">
    <property type="entry name" value="ZF_RING_CH"/>
    <property type="match status" value="1"/>
</dbReference>
<name>MARHB_HUMAN</name>
<accession>A6NNE9</accession>
<accession>A7E2S6</accession>
<protein>
    <recommendedName>
        <fullName>E3 ubiquitin-protein ligase MARCHF11</fullName>
        <ecNumber>2.3.2.27</ecNumber>
    </recommendedName>
    <alternativeName>
        <fullName>Membrane-associated RING finger protein 11</fullName>
    </alternativeName>
    <alternativeName>
        <fullName>Membrane-associated RING-CH protein XI</fullName>
        <shortName>MARCH-XI</shortName>
    </alternativeName>
    <alternativeName>
        <fullName evidence="6">RING-type E3 ubiquitin transferase MARCHF11</fullName>
    </alternativeName>
</protein>
<organism>
    <name type="scientific">Homo sapiens</name>
    <name type="common">Human</name>
    <dbReference type="NCBI Taxonomy" id="9606"/>
    <lineage>
        <taxon>Eukaryota</taxon>
        <taxon>Metazoa</taxon>
        <taxon>Chordata</taxon>
        <taxon>Craniata</taxon>
        <taxon>Vertebrata</taxon>
        <taxon>Euteleostomi</taxon>
        <taxon>Mammalia</taxon>
        <taxon>Eutheria</taxon>
        <taxon>Euarchontoglires</taxon>
        <taxon>Primates</taxon>
        <taxon>Haplorrhini</taxon>
        <taxon>Catarrhini</taxon>
        <taxon>Hominidae</taxon>
        <taxon>Homo</taxon>
    </lineage>
</organism>
<reference key="1">
    <citation type="journal article" date="2004" name="Nature">
        <title>The DNA sequence and comparative analysis of human chromosome 5.</title>
        <authorList>
            <person name="Schmutz J."/>
            <person name="Martin J."/>
            <person name="Terry A."/>
            <person name="Couronne O."/>
            <person name="Grimwood J."/>
            <person name="Lowry S."/>
            <person name="Gordon L.A."/>
            <person name="Scott D."/>
            <person name="Xie G."/>
            <person name="Huang W."/>
            <person name="Hellsten U."/>
            <person name="Tran-Gyamfi M."/>
            <person name="She X."/>
            <person name="Prabhakar S."/>
            <person name="Aerts A."/>
            <person name="Altherr M."/>
            <person name="Bajorek E."/>
            <person name="Black S."/>
            <person name="Branscomb E."/>
            <person name="Caoile C."/>
            <person name="Challacombe J.F."/>
            <person name="Chan Y.M."/>
            <person name="Denys M."/>
            <person name="Detter J.C."/>
            <person name="Escobar J."/>
            <person name="Flowers D."/>
            <person name="Fotopulos D."/>
            <person name="Glavina T."/>
            <person name="Gomez M."/>
            <person name="Gonzales E."/>
            <person name="Goodstein D."/>
            <person name="Grigoriev I."/>
            <person name="Groza M."/>
            <person name="Hammon N."/>
            <person name="Hawkins T."/>
            <person name="Haydu L."/>
            <person name="Israni S."/>
            <person name="Jett J."/>
            <person name="Kadner K."/>
            <person name="Kimball H."/>
            <person name="Kobayashi A."/>
            <person name="Lopez F."/>
            <person name="Lou Y."/>
            <person name="Martinez D."/>
            <person name="Medina C."/>
            <person name="Morgan J."/>
            <person name="Nandkeshwar R."/>
            <person name="Noonan J.P."/>
            <person name="Pitluck S."/>
            <person name="Pollard M."/>
            <person name="Predki P."/>
            <person name="Priest J."/>
            <person name="Ramirez L."/>
            <person name="Retterer J."/>
            <person name="Rodriguez A."/>
            <person name="Rogers S."/>
            <person name="Salamov A."/>
            <person name="Salazar A."/>
            <person name="Thayer N."/>
            <person name="Tice H."/>
            <person name="Tsai M."/>
            <person name="Ustaszewska A."/>
            <person name="Vo N."/>
            <person name="Wheeler J."/>
            <person name="Wu K."/>
            <person name="Yang J."/>
            <person name="Dickson M."/>
            <person name="Cheng J.-F."/>
            <person name="Eichler E.E."/>
            <person name="Olsen A."/>
            <person name="Pennacchio L.A."/>
            <person name="Rokhsar D.S."/>
            <person name="Richardson P."/>
            <person name="Lucas S.M."/>
            <person name="Myers R.M."/>
            <person name="Rubin E.M."/>
        </authorList>
    </citation>
    <scope>NUCLEOTIDE SEQUENCE [LARGE SCALE GENOMIC DNA]</scope>
</reference>
<reference key="2">
    <citation type="journal article" date="2004" name="Genome Res.">
        <title>The status, quality, and expansion of the NIH full-length cDNA project: the Mammalian Gene Collection (MGC).</title>
        <authorList>
            <consortium name="The MGC Project Team"/>
        </authorList>
    </citation>
    <scope>NUCLEOTIDE SEQUENCE [LARGE SCALE MRNA] (ISOFORM 2)</scope>
</reference>
<reference key="3">
    <citation type="submission" date="2004-07" db="EMBL/GenBank/DDBJ databases">
        <title>Full-length cDNA libraries and normalization.</title>
        <authorList>
            <person name="Li W.B."/>
            <person name="Gruber C."/>
            <person name="Jessee J."/>
            <person name="Polayes D."/>
        </authorList>
    </citation>
    <scope>NUCLEOTIDE SEQUENCE [LARGE SCALE MRNA] OF 40-402 (ISOFORM 1)</scope>
    <source>
        <tissue>Neuroblastoma</tissue>
    </source>
</reference>
<gene>
    <name evidence="7" type="primary">MARCHF11</name>
    <name type="synonym">MARCH11</name>
</gene>
<proteinExistence type="evidence at protein level"/>
<comment type="function">
    <text evidence="1">E3 ubiquitin-protein ligase that mediates polyubiquitination of CD4. E3 ubiquitin ligases accept ubiquitin from an E2 ubiquitin-conjugating enzyme in the form of a thioester and then directly transfer the ubiquitin to targeted substrates. May play a role in ubuquitin-dependent protein sorting in developmenting spermatids.</text>
</comment>
<comment type="catalytic activity">
    <reaction>
        <text>S-ubiquitinyl-[E2 ubiquitin-conjugating enzyme]-L-cysteine + [acceptor protein]-L-lysine = [E2 ubiquitin-conjugating enzyme]-L-cysteine + N(6)-ubiquitinyl-[acceptor protein]-L-lysine.</text>
        <dbReference type="EC" id="2.3.2.27"/>
    </reaction>
</comment>
<comment type="pathway">
    <text>Protein modification; protein ubiquitination.</text>
</comment>
<comment type="subunit">
    <text evidence="1">Interacts (YXXL motif) with AP1M1. Interacts (via PDZ-binding motif) with LIN7A. Interacts with unidentified fucose glycoproteins.</text>
</comment>
<comment type="subcellular location">
    <subcellularLocation>
        <location evidence="1">Cytoplasmic vesicle membrane</location>
        <topology evidence="1">Multi-pass membrane protein</topology>
    </subcellularLocation>
</comment>
<comment type="alternative products">
    <event type="alternative splicing"/>
    <isoform>
        <id>A6NNE9-1</id>
        <name>1</name>
        <sequence type="displayed"/>
    </isoform>
    <isoform>
        <id>A6NNE9-2</id>
        <name>2</name>
        <sequence type="described" ref="VSP_034147"/>
    </isoform>
</comment>
<comment type="domain">
    <text evidence="3">The RING-CH-type zinc finger domain is required for E3 ligase activity.</text>
</comment>
<keyword id="KW-0025">Alternative splicing</keyword>
<keyword id="KW-0968">Cytoplasmic vesicle</keyword>
<keyword id="KW-0472">Membrane</keyword>
<keyword id="KW-0479">Metal-binding</keyword>
<keyword id="KW-1267">Proteomics identification</keyword>
<keyword id="KW-1185">Reference proteome</keyword>
<keyword id="KW-0808">Transferase</keyword>
<keyword id="KW-0812">Transmembrane</keyword>
<keyword id="KW-1133">Transmembrane helix</keyword>
<keyword id="KW-0833">Ubl conjugation pathway</keyword>
<keyword id="KW-0862">Zinc</keyword>
<keyword id="KW-0863">Zinc-finger</keyword>
<sequence>MSFEGGHGGSRCRGAESGDAEPPPQPPPPPPPTPPPGEPAPVPAAPRYLPPLPASPETPERAAGPSEPLGEVAPRCRGADELPPPPLPLQPAGQEVAAAGDSGEGPRRLPEAAAAKGGPGESEAGAGGERERRGAGDQPETRSVCSSRSSSSGGGDQRAGHQHQHHQPICKICFQGAEQGELLNPCRCDGSVRYTHQLCLLKWISERGSWTCELCCYRYHVIAIKMKQPCQWQSISITLVEKVQMIAVILGSLFLIASVTWLLWSAFSPYAVWQRKDILFQICYGMYGFMDLVCIGLIVHEGAAVYRVFKRWRAVNLHWDVLNYDKATDIEESSRGESSTSRTLWLPLTALRNRNLVHPTQLTSPRFQCGYVLLHLFNRMRPHEDLSEDNSSGEVVMRVTSV</sequence>
<evidence type="ECO:0000250" key="1">
    <source>
        <dbReference type="UniProtKB" id="A6P320"/>
    </source>
</evidence>
<evidence type="ECO:0000255" key="2"/>
<evidence type="ECO:0000255" key="3">
    <source>
        <dbReference type="PROSITE-ProRule" id="PRU00623"/>
    </source>
</evidence>
<evidence type="ECO:0000256" key="4">
    <source>
        <dbReference type="SAM" id="MobiDB-lite"/>
    </source>
</evidence>
<evidence type="ECO:0000303" key="5">
    <source>
    </source>
</evidence>
<evidence type="ECO:0000305" key="6"/>
<evidence type="ECO:0000312" key="7">
    <source>
        <dbReference type="HGNC" id="HGNC:33609"/>
    </source>
</evidence>
<feature type="chain" id="PRO_0000339344" description="E3 ubiquitin-protein ligase MARCHF11">
    <location>
        <begin position="1"/>
        <end position="402"/>
    </location>
</feature>
<feature type="transmembrane region" description="Helical" evidence="2">
    <location>
        <begin position="245"/>
        <end position="265"/>
    </location>
</feature>
<feature type="transmembrane region" description="Helical" evidence="2">
    <location>
        <begin position="278"/>
        <end position="298"/>
    </location>
</feature>
<feature type="zinc finger region" description="RING-CH-type" evidence="3">
    <location>
        <begin position="162"/>
        <end position="222"/>
    </location>
</feature>
<feature type="region of interest" description="Disordered" evidence="4">
    <location>
        <begin position="1"/>
        <end position="161"/>
    </location>
</feature>
<feature type="short sequence motif" description="YXXL motif">
    <location>
        <begin position="371"/>
        <end position="374"/>
    </location>
</feature>
<feature type="short sequence motif" description="PDZ-binding">
    <location>
        <begin position="399"/>
        <end position="402"/>
    </location>
</feature>
<feature type="compositionally biased region" description="Gly residues" evidence="4">
    <location>
        <begin position="1"/>
        <end position="11"/>
    </location>
</feature>
<feature type="compositionally biased region" description="Pro residues" evidence="4">
    <location>
        <begin position="21"/>
        <end position="56"/>
    </location>
</feature>
<feature type="compositionally biased region" description="Low complexity" evidence="4">
    <location>
        <begin position="111"/>
        <end position="124"/>
    </location>
</feature>
<feature type="binding site" evidence="3">
    <location>
        <position position="170"/>
    </location>
    <ligand>
        <name>Zn(2+)</name>
        <dbReference type="ChEBI" id="CHEBI:29105"/>
        <label>1</label>
    </ligand>
</feature>
<feature type="binding site" evidence="3">
    <location>
        <position position="173"/>
    </location>
    <ligand>
        <name>Zn(2+)</name>
        <dbReference type="ChEBI" id="CHEBI:29105"/>
        <label>1</label>
    </ligand>
</feature>
<feature type="binding site" evidence="3">
    <location>
        <position position="186"/>
    </location>
    <ligand>
        <name>Zn(2+)</name>
        <dbReference type="ChEBI" id="CHEBI:29105"/>
        <label>2</label>
    </ligand>
</feature>
<feature type="binding site" evidence="3">
    <location>
        <position position="188"/>
    </location>
    <ligand>
        <name>Zn(2+)</name>
        <dbReference type="ChEBI" id="CHEBI:29105"/>
        <label>2</label>
    </ligand>
</feature>
<feature type="binding site" evidence="3">
    <location>
        <position position="196"/>
    </location>
    <ligand>
        <name>Zn(2+)</name>
        <dbReference type="ChEBI" id="CHEBI:29105"/>
        <label>1</label>
    </ligand>
</feature>
<feature type="binding site" evidence="3">
    <location>
        <position position="199"/>
    </location>
    <ligand>
        <name>Zn(2+)</name>
        <dbReference type="ChEBI" id="CHEBI:29105"/>
        <label>1</label>
    </ligand>
</feature>
<feature type="binding site" evidence="3">
    <location>
        <position position="212"/>
    </location>
    <ligand>
        <name>Zn(2+)</name>
        <dbReference type="ChEBI" id="CHEBI:29105"/>
        <label>2</label>
    </ligand>
</feature>
<feature type="binding site" evidence="3">
    <location>
        <position position="215"/>
    </location>
    <ligand>
        <name>Zn(2+)</name>
        <dbReference type="ChEBI" id="CHEBI:29105"/>
        <label>2</label>
    </ligand>
</feature>
<feature type="splice variant" id="VSP_034147" description="In isoform 2." evidence="5">
    <location>
        <begin position="1"/>
        <end position="244"/>
    </location>
</feature>